<comment type="function">
    <text evidence="2">Functions in trans to edit the amino acid moiety from incorrectly charged Ser-tRNA(Ala) or Gly-tRNA(Ala). Has no activity on incorrectly charged Ser-tRNA(Thr), nor on correctly charged Ala-tRNA(Ala) or Ser-tRNA(Ser).</text>
</comment>
<comment type="cofactor">
    <cofactor evidence="1">
        <name>Zn(2+)</name>
        <dbReference type="ChEBI" id="CHEBI:29105"/>
    </cofactor>
    <text evidence="1">Binds 1 zinc ion per subunit.</text>
</comment>
<comment type="subcellular location">
    <subcellularLocation>
        <location evidence="3">Cytoplasm</location>
    </subcellularLocation>
</comment>
<comment type="similarity">
    <text evidence="3">Belongs to the class-II aminoacyl-tRNA synthetase family. Editing domain AlaX-M subfamily.</text>
</comment>
<proteinExistence type="evidence at protein level"/>
<sequence length="243" mass="27600">MTEALYFLDCYMKEFEATVEKVTDDKFVVLDRTVFYPESGGQPSDTGKLVRESDGAEFNVLYVRKFNGDISHEIDGENVSNGLKAGDKVKGFIDWDRRYRHMRMHTATHVIANVIEKEAGAQITGNQLGLDQSRVDFSLEVFDRDKFAEYEKIANDLIAQKSPVNLYLVSRKEAEEKLSRLTTLAKGFSDEIKEVRIVEIEGVTIEACGGTHVKNTEEIKGVKIIKLQNKGKSNRRMYFTLVD</sequence>
<reference key="1">
    <citation type="journal article" date="2006" name="J. Bacteriol.">
        <title>The Methanosarcina barkeri genome: comparative analysis with Methanosarcina acetivorans and Methanosarcina mazei reveals extensive rearrangement within methanosarcinal genomes.</title>
        <authorList>
            <person name="Maeder D.L."/>
            <person name="Anderson I."/>
            <person name="Brettin T.S."/>
            <person name="Bruce D.C."/>
            <person name="Gilna P."/>
            <person name="Han C.S."/>
            <person name="Lapidus A."/>
            <person name="Metcalf W.W."/>
            <person name="Saunders E."/>
            <person name="Tapia R."/>
            <person name="Sowers K.R."/>
        </authorList>
    </citation>
    <scope>NUCLEOTIDE SEQUENCE [LARGE SCALE GENOMIC DNA]</scope>
    <source>
        <strain>Fusaro / DSM 804</strain>
    </source>
</reference>
<reference key="2">
    <citation type="journal article" date="2003" name="Proc. Natl. Acad. Sci. U.S.A.">
        <title>Trans-editing of mischarged tRNAs.</title>
        <authorList>
            <person name="Ahel I."/>
            <person name="Korencic D."/>
            <person name="Ibba M."/>
            <person name="Soll D."/>
        </authorList>
    </citation>
    <scope>FUNCTION AS TRNA(ALA) EDITING PROTEIN</scope>
</reference>
<organism>
    <name type="scientific">Methanosarcina barkeri (strain Fusaro / DSM 804)</name>
    <dbReference type="NCBI Taxonomy" id="269797"/>
    <lineage>
        <taxon>Archaea</taxon>
        <taxon>Methanobacteriati</taxon>
        <taxon>Methanobacteriota</taxon>
        <taxon>Stenosarchaea group</taxon>
        <taxon>Methanomicrobia</taxon>
        <taxon>Methanosarcinales</taxon>
        <taxon>Methanosarcinaceae</taxon>
        <taxon>Methanosarcina</taxon>
    </lineage>
</organism>
<accession>Q46AR9</accession>
<evidence type="ECO:0000250" key="1"/>
<evidence type="ECO:0000269" key="2">
    <source>
    </source>
</evidence>
<evidence type="ECO:0000305" key="3"/>
<gene>
    <name type="primary">alaXM</name>
    <name type="ordered locus">Mbar_A2092</name>
</gene>
<feature type="chain" id="PRO_0000391646" description="Alanyl-tRNA editing protein AlaX-M">
    <location>
        <begin position="1"/>
        <end position="243"/>
    </location>
</feature>
<feature type="binding site" evidence="1">
    <location>
        <position position="105"/>
    </location>
    <ligand>
        <name>Zn(2+)</name>
        <dbReference type="ChEBI" id="CHEBI:29105"/>
    </ligand>
</feature>
<feature type="binding site" evidence="1">
    <location>
        <position position="109"/>
    </location>
    <ligand>
        <name>Zn(2+)</name>
        <dbReference type="ChEBI" id="CHEBI:29105"/>
    </ligand>
</feature>
<feature type="binding site" evidence="1">
    <location>
        <position position="208"/>
    </location>
    <ligand>
        <name>Zn(2+)</name>
        <dbReference type="ChEBI" id="CHEBI:29105"/>
    </ligand>
</feature>
<feature type="binding site" evidence="1">
    <location>
        <position position="212"/>
    </location>
    <ligand>
        <name>Zn(2+)</name>
        <dbReference type="ChEBI" id="CHEBI:29105"/>
    </ligand>
</feature>
<protein>
    <recommendedName>
        <fullName>Alanyl-tRNA editing protein AlaX-M</fullName>
        <shortName>AlaX-M</shortName>
    </recommendedName>
    <alternativeName>
        <fullName>Alanyl-tRNA deacylase AlaX-M</fullName>
    </alternativeName>
</protein>
<dbReference type="EMBL" id="CP000099">
    <property type="protein sequence ID" value="AAZ71023.1"/>
    <property type="molecule type" value="Genomic_DNA"/>
</dbReference>
<dbReference type="SMR" id="Q46AR9"/>
<dbReference type="STRING" id="269797.Mbar_A2092"/>
<dbReference type="PaxDb" id="269797-Mbar_A2092"/>
<dbReference type="KEGG" id="mba:Mbar_A2092"/>
<dbReference type="eggNOG" id="arCOG01254">
    <property type="taxonomic scope" value="Archaea"/>
</dbReference>
<dbReference type="HOGENOM" id="CLU_004485_3_2_2"/>
<dbReference type="OrthoDB" id="11392at2157"/>
<dbReference type="GO" id="GO:0005737">
    <property type="term" value="C:cytoplasm"/>
    <property type="evidence" value="ECO:0007669"/>
    <property type="project" value="UniProtKB-SubCell"/>
</dbReference>
<dbReference type="GO" id="GO:0004813">
    <property type="term" value="F:alanine-tRNA ligase activity"/>
    <property type="evidence" value="ECO:0007669"/>
    <property type="project" value="InterPro"/>
</dbReference>
<dbReference type="GO" id="GO:0002161">
    <property type="term" value="F:aminoacyl-tRNA deacylase activity"/>
    <property type="evidence" value="ECO:0000314"/>
    <property type="project" value="UniProtKB"/>
</dbReference>
<dbReference type="GO" id="GO:0005524">
    <property type="term" value="F:ATP binding"/>
    <property type="evidence" value="ECO:0007669"/>
    <property type="project" value="InterPro"/>
</dbReference>
<dbReference type="GO" id="GO:0046872">
    <property type="term" value="F:metal ion binding"/>
    <property type="evidence" value="ECO:0007669"/>
    <property type="project" value="UniProtKB-KW"/>
</dbReference>
<dbReference type="GO" id="GO:0003676">
    <property type="term" value="F:nucleic acid binding"/>
    <property type="evidence" value="ECO:0007669"/>
    <property type="project" value="InterPro"/>
</dbReference>
<dbReference type="GO" id="GO:0006419">
    <property type="term" value="P:alanyl-tRNA aminoacylation"/>
    <property type="evidence" value="ECO:0007669"/>
    <property type="project" value="InterPro"/>
</dbReference>
<dbReference type="FunFam" id="2.40.30.130:FF:000010">
    <property type="entry name" value="Alanine--tRNA ligase"/>
    <property type="match status" value="1"/>
</dbReference>
<dbReference type="FunFam" id="3.30.980.10:FF:000014">
    <property type="entry name" value="Alanyl-tRNA editing protein AlaX-M"/>
    <property type="match status" value="1"/>
</dbReference>
<dbReference type="Gene3D" id="2.40.30.130">
    <property type="match status" value="1"/>
</dbReference>
<dbReference type="Gene3D" id="3.30.980.10">
    <property type="entry name" value="Threonyl-trna Synthetase, Chain A, domain 2"/>
    <property type="match status" value="1"/>
</dbReference>
<dbReference type="InterPro" id="IPR018165">
    <property type="entry name" value="Ala-tRNA-synth_IIc_core"/>
</dbReference>
<dbReference type="InterPro" id="IPR018164">
    <property type="entry name" value="Ala-tRNA-synth_IIc_N"/>
</dbReference>
<dbReference type="InterPro" id="IPR053424">
    <property type="entry name" value="Alanyl-tRNA_Edit-Domain"/>
</dbReference>
<dbReference type="InterPro" id="IPR051335">
    <property type="entry name" value="Alanyl-tRNA_Editing_Enzymes"/>
</dbReference>
<dbReference type="InterPro" id="IPR018163">
    <property type="entry name" value="Thr/Ala-tRNA-synth_IIc_edit"/>
</dbReference>
<dbReference type="InterPro" id="IPR009000">
    <property type="entry name" value="Transl_B-barrel_sf"/>
</dbReference>
<dbReference type="InterPro" id="IPR012947">
    <property type="entry name" value="tRNA_SAD"/>
</dbReference>
<dbReference type="NCBIfam" id="NF040865">
    <property type="entry name" value="a_tRNA_ed_AlaXM"/>
    <property type="match status" value="1"/>
</dbReference>
<dbReference type="PANTHER" id="PTHR43462">
    <property type="entry name" value="ALANYL-TRNA EDITING PROTEIN"/>
    <property type="match status" value="1"/>
</dbReference>
<dbReference type="PANTHER" id="PTHR43462:SF1">
    <property type="entry name" value="ALANYL-TRNA EDITING PROTEIN AARSD1"/>
    <property type="match status" value="1"/>
</dbReference>
<dbReference type="Pfam" id="PF01411">
    <property type="entry name" value="tRNA-synt_2c"/>
    <property type="match status" value="1"/>
</dbReference>
<dbReference type="Pfam" id="PF07973">
    <property type="entry name" value="tRNA_SAD"/>
    <property type="match status" value="1"/>
</dbReference>
<dbReference type="SMART" id="SM00863">
    <property type="entry name" value="tRNA_SAD"/>
    <property type="match status" value="1"/>
</dbReference>
<dbReference type="SUPFAM" id="SSF55186">
    <property type="entry name" value="ThrRS/AlaRS common domain"/>
    <property type="match status" value="1"/>
</dbReference>
<dbReference type="SUPFAM" id="SSF50447">
    <property type="entry name" value="Translation proteins"/>
    <property type="match status" value="1"/>
</dbReference>
<dbReference type="PROSITE" id="PS50860">
    <property type="entry name" value="AA_TRNA_LIGASE_II_ALA"/>
    <property type="match status" value="1"/>
</dbReference>
<keyword id="KW-0963">Cytoplasm</keyword>
<keyword id="KW-0479">Metal-binding</keyword>
<keyword id="KW-0862">Zinc</keyword>
<name>ALAXM_METBF</name>